<accession>Q8KA74</accession>
<protein>
    <recommendedName>
        <fullName evidence="1">Bifunctional protein GlmU</fullName>
    </recommendedName>
    <domain>
        <recommendedName>
            <fullName evidence="1">UDP-N-acetylglucosamine pyrophosphorylase</fullName>
            <ecNumber evidence="1">2.7.7.23</ecNumber>
        </recommendedName>
        <alternativeName>
            <fullName evidence="1">N-acetylglucosamine-1-phosphate uridyltransferase</fullName>
        </alternativeName>
    </domain>
    <domain>
        <recommendedName>
            <fullName evidence="1">Glucosamine-1-phosphate N-acetyltransferase</fullName>
            <ecNumber evidence="1">2.3.1.157</ecNumber>
        </recommendedName>
    </domain>
</protein>
<comment type="function">
    <text evidence="1">Catalyzes the last two sequential reactions in the de novo biosynthetic pathway for UDP-N-acetylglucosamine (UDP-GlcNAc). The C-terminal domain catalyzes the transfer of acetyl group from acetyl coenzyme A to glucosamine-1-phosphate (GlcN-1-P) to produce N-acetylglucosamine-1-phosphate (GlcNAc-1-P), which is converted into UDP-GlcNAc by the transfer of uridine 5-monophosphate (from uridine 5-triphosphate), a reaction catalyzed by the N-terminal domain.</text>
</comment>
<comment type="catalytic activity">
    <reaction evidence="1">
        <text>alpha-D-glucosamine 1-phosphate + acetyl-CoA = N-acetyl-alpha-D-glucosamine 1-phosphate + CoA + H(+)</text>
        <dbReference type="Rhea" id="RHEA:13725"/>
        <dbReference type="ChEBI" id="CHEBI:15378"/>
        <dbReference type="ChEBI" id="CHEBI:57287"/>
        <dbReference type="ChEBI" id="CHEBI:57288"/>
        <dbReference type="ChEBI" id="CHEBI:57776"/>
        <dbReference type="ChEBI" id="CHEBI:58516"/>
        <dbReference type="EC" id="2.3.1.157"/>
    </reaction>
</comment>
<comment type="catalytic activity">
    <reaction evidence="1">
        <text>N-acetyl-alpha-D-glucosamine 1-phosphate + UTP + H(+) = UDP-N-acetyl-alpha-D-glucosamine + diphosphate</text>
        <dbReference type="Rhea" id="RHEA:13509"/>
        <dbReference type="ChEBI" id="CHEBI:15378"/>
        <dbReference type="ChEBI" id="CHEBI:33019"/>
        <dbReference type="ChEBI" id="CHEBI:46398"/>
        <dbReference type="ChEBI" id="CHEBI:57705"/>
        <dbReference type="ChEBI" id="CHEBI:57776"/>
        <dbReference type="EC" id="2.7.7.23"/>
    </reaction>
</comment>
<comment type="cofactor">
    <cofactor evidence="1">
        <name>Mg(2+)</name>
        <dbReference type="ChEBI" id="CHEBI:18420"/>
    </cofactor>
    <text evidence="1">Binds 1 Mg(2+) ion per subunit.</text>
</comment>
<comment type="pathway">
    <text evidence="1">Nucleotide-sugar biosynthesis; UDP-N-acetyl-alpha-D-glucosamine biosynthesis; N-acetyl-alpha-D-glucosamine 1-phosphate from alpha-D-glucosamine 6-phosphate (route II): step 2/2.</text>
</comment>
<comment type="pathway">
    <text evidence="1">Nucleotide-sugar biosynthesis; UDP-N-acetyl-alpha-D-glucosamine biosynthesis; UDP-N-acetyl-alpha-D-glucosamine from N-acetyl-alpha-D-glucosamine 1-phosphate: step 1/1.</text>
</comment>
<comment type="pathway">
    <text evidence="1">Bacterial outer membrane biogenesis; LPS lipid A biosynthesis.</text>
</comment>
<comment type="subunit">
    <text evidence="1">Homotrimer.</text>
</comment>
<comment type="subcellular location">
    <subcellularLocation>
        <location evidence="1">Cytoplasm</location>
    </subcellularLocation>
</comment>
<comment type="similarity">
    <text evidence="1">In the N-terminal section; belongs to the N-acetylglucosamine-1-phosphate uridyltransferase family.</text>
</comment>
<comment type="similarity">
    <text evidence="1">In the C-terminal section; belongs to the transferase hexapeptide repeat family.</text>
</comment>
<feature type="chain" id="PRO_0000068699" description="Bifunctional protein GlmU">
    <location>
        <begin position="1"/>
        <end position="461"/>
    </location>
</feature>
<feature type="region of interest" description="Pyrophosphorylase" evidence="1">
    <location>
        <begin position="1"/>
        <end position="229"/>
    </location>
</feature>
<feature type="region of interest" description="Linker" evidence="1">
    <location>
        <begin position="230"/>
        <end position="250"/>
    </location>
</feature>
<feature type="region of interest" description="N-acetyltransferase" evidence="1">
    <location>
        <begin position="251"/>
        <end position="461"/>
    </location>
</feature>
<feature type="active site" description="Proton acceptor" evidence="1">
    <location>
        <position position="363"/>
    </location>
</feature>
<feature type="binding site" evidence="1">
    <location>
        <begin position="11"/>
        <end position="14"/>
    </location>
    <ligand>
        <name>UDP-N-acetyl-alpha-D-glucosamine</name>
        <dbReference type="ChEBI" id="CHEBI:57705"/>
    </ligand>
</feature>
<feature type="binding site" evidence="1">
    <location>
        <position position="25"/>
    </location>
    <ligand>
        <name>UDP-N-acetyl-alpha-D-glucosamine</name>
        <dbReference type="ChEBI" id="CHEBI:57705"/>
    </ligand>
</feature>
<feature type="binding site" evidence="1">
    <location>
        <position position="76"/>
    </location>
    <ligand>
        <name>UDP-N-acetyl-alpha-D-glucosamine</name>
        <dbReference type="ChEBI" id="CHEBI:57705"/>
    </ligand>
</feature>
<feature type="binding site" evidence="1">
    <location>
        <begin position="81"/>
        <end position="82"/>
    </location>
    <ligand>
        <name>UDP-N-acetyl-alpha-D-glucosamine</name>
        <dbReference type="ChEBI" id="CHEBI:57705"/>
    </ligand>
</feature>
<feature type="binding site" evidence="1">
    <location>
        <begin position="103"/>
        <end position="105"/>
    </location>
    <ligand>
        <name>UDP-N-acetyl-alpha-D-glucosamine</name>
        <dbReference type="ChEBI" id="CHEBI:57705"/>
    </ligand>
</feature>
<feature type="binding site" evidence="1">
    <location>
        <position position="105"/>
    </location>
    <ligand>
        <name>Mg(2+)</name>
        <dbReference type="ChEBI" id="CHEBI:18420"/>
    </ligand>
</feature>
<feature type="binding site" evidence="1">
    <location>
        <position position="140"/>
    </location>
    <ligand>
        <name>UDP-N-acetyl-alpha-D-glucosamine</name>
        <dbReference type="ChEBI" id="CHEBI:57705"/>
    </ligand>
</feature>
<feature type="binding site" evidence="1">
    <location>
        <position position="154"/>
    </location>
    <ligand>
        <name>UDP-N-acetyl-alpha-D-glucosamine</name>
        <dbReference type="ChEBI" id="CHEBI:57705"/>
    </ligand>
</feature>
<feature type="binding site" evidence="1">
    <location>
        <position position="227"/>
    </location>
    <ligand>
        <name>Mg(2+)</name>
        <dbReference type="ChEBI" id="CHEBI:18420"/>
    </ligand>
</feature>
<feature type="binding site" evidence="1">
    <location>
        <position position="227"/>
    </location>
    <ligand>
        <name>UDP-N-acetyl-alpha-D-glucosamine</name>
        <dbReference type="ChEBI" id="CHEBI:57705"/>
    </ligand>
</feature>
<feature type="binding site" evidence="1">
    <location>
        <position position="333"/>
    </location>
    <ligand>
        <name>UDP-N-acetyl-alpha-D-glucosamine</name>
        <dbReference type="ChEBI" id="CHEBI:57705"/>
    </ligand>
</feature>
<feature type="binding site" evidence="1">
    <location>
        <position position="351"/>
    </location>
    <ligand>
        <name>UDP-N-acetyl-alpha-D-glucosamine</name>
        <dbReference type="ChEBI" id="CHEBI:57705"/>
    </ligand>
</feature>
<feature type="binding site" evidence="1">
    <location>
        <position position="366"/>
    </location>
    <ligand>
        <name>UDP-N-acetyl-alpha-D-glucosamine</name>
        <dbReference type="ChEBI" id="CHEBI:57705"/>
    </ligand>
</feature>
<feature type="binding site" evidence="1">
    <location>
        <position position="377"/>
    </location>
    <ligand>
        <name>UDP-N-acetyl-alpha-D-glucosamine</name>
        <dbReference type="ChEBI" id="CHEBI:57705"/>
    </ligand>
</feature>
<feature type="binding site" evidence="1">
    <location>
        <position position="380"/>
    </location>
    <ligand>
        <name>acetyl-CoA</name>
        <dbReference type="ChEBI" id="CHEBI:57288"/>
    </ligand>
</feature>
<feature type="binding site" evidence="1">
    <location>
        <begin position="386"/>
        <end position="387"/>
    </location>
    <ligand>
        <name>acetyl-CoA</name>
        <dbReference type="ChEBI" id="CHEBI:57288"/>
    </ligand>
</feature>
<feature type="binding site" evidence="1">
    <location>
        <position position="423"/>
    </location>
    <ligand>
        <name>acetyl-CoA</name>
        <dbReference type="ChEBI" id="CHEBI:57288"/>
    </ligand>
</feature>
<name>GLMU_BUCAP</name>
<gene>
    <name evidence="1" type="primary">glmU</name>
    <name type="ordered locus">BUsg_028</name>
</gene>
<sequence>MLKKEINVVILAAGKGTRMQSSYPKVLHKLGGKTILEHVINIAKSVKPKKIILVYNNKEKEIKSKISDTSIDWVIQKEQKGTGDAILKASKKFSDKDDIVVLYGDMPYISIESIKKLFTSKKQSDISLLTAYVKNPDGYGRVFKKNGKVIKIIEEQDANFHEKKIKEVYSGTFIANGKDLKRWLNQINNKNIKKEFYATDIVHFANLENSTIKTVQVLNCKEILGVNNKLQLSILEKIFRKKQVNDLLLSGVTLKDPNHFILRGILKHGKNIEIDTGVILEGNIILGNNIKIGVGSVIKNSFIDDQTEIKEYTIIENVKIGKKCIIGPFAHLRPKTVLDDQIHVGNFVEIKDSIIKKESKIKHLSYFGNSEIGSQVNIGAGSITCNYDGVNKFKTIIGDNVLIGANTKLIAPIKITKNATIAAGTTLTQDVNTPCLIYNNKEQKQKKNWKRPQKIIKKTDQ</sequence>
<reference key="1">
    <citation type="journal article" date="2002" name="Science">
        <title>50 million years of genomic stasis in endosymbiotic bacteria.</title>
        <authorList>
            <person name="Tamas I."/>
            <person name="Klasson L."/>
            <person name="Canbaeck B."/>
            <person name="Naeslund A.K."/>
            <person name="Eriksson A.-S."/>
            <person name="Wernegreen J.J."/>
            <person name="Sandstroem J.P."/>
            <person name="Moran N.A."/>
            <person name="Andersson S.G.E."/>
        </authorList>
    </citation>
    <scope>NUCLEOTIDE SEQUENCE [LARGE SCALE GENOMIC DNA]</scope>
    <source>
        <strain>Sg</strain>
    </source>
</reference>
<organism>
    <name type="scientific">Buchnera aphidicola subsp. Schizaphis graminum (strain Sg)</name>
    <dbReference type="NCBI Taxonomy" id="198804"/>
    <lineage>
        <taxon>Bacteria</taxon>
        <taxon>Pseudomonadati</taxon>
        <taxon>Pseudomonadota</taxon>
        <taxon>Gammaproteobacteria</taxon>
        <taxon>Enterobacterales</taxon>
        <taxon>Erwiniaceae</taxon>
        <taxon>Buchnera</taxon>
    </lineage>
</organism>
<keyword id="KW-0012">Acyltransferase</keyword>
<keyword id="KW-0133">Cell shape</keyword>
<keyword id="KW-0961">Cell wall biogenesis/degradation</keyword>
<keyword id="KW-0963">Cytoplasm</keyword>
<keyword id="KW-0460">Magnesium</keyword>
<keyword id="KW-0479">Metal-binding</keyword>
<keyword id="KW-0511">Multifunctional enzyme</keyword>
<keyword id="KW-0548">Nucleotidyltransferase</keyword>
<keyword id="KW-0573">Peptidoglycan synthesis</keyword>
<keyword id="KW-0677">Repeat</keyword>
<keyword id="KW-0808">Transferase</keyword>
<dbReference type="EC" id="2.7.7.23" evidence="1"/>
<dbReference type="EC" id="2.3.1.157" evidence="1"/>
<dbReference type="EMBL" id="AE013218">
    <property type="protein sequence ID" value="AAM67599.1"/>
    <property type="molecule type" value="Genomic_DNA"/>
</dbReference>
<dbReference type="RefSeq" id="WP_011053565.1">
    <property type="nucleotide sequence ID" value="NC_004061.1"/>
</dbReference>
<dbReference type="SMR" id="Q8KA74"/>
<dbReference type="STRING" id="198804.BUsg_028"/>
<dbReference type="GeneID" id="93003491"/>
<dbReference type="KEGG" id="bas:BUsg_028"/>
<dbReference type="eggNOG" id="COG1207">
    <property type="taxonomic scope" value="Bacteria"/>
</dbReference>
<dbReference type="HOGENOM" id="CLU_029499_15_2_6"/>
<dbReference type="UniPathway" id="UPA00113">
    <property type="reaction ID" value="UER00532"/>
</dbReference>
<dbReference type="UniPathway" id="UPA00113">
    <property type="reaction ID" value="UER00533"/>
</dbReference>
<dbReference type="UniPathway" id="UPA00973"/>
<dbReference type="Proteomes" id="UP000000416">
    <property type="component" value="Chromosome"/>
</dbReference>
<dbReference type="GO" id="GO:0005737">
    <property type="term" value="C:cytoplasm"/>
    <property type="evidence" value="ECO:0007669"/>
    <property type="project" value="UniProtKB-SubCell"/>
</dbReference>
<dbReference type="GO" id="GO:0016020">
    <property type="term" value="C:membrane"/>
    <property type="evidence" value="ECO:0007669"/>
    <property type="project" value="GOC"/>
</dbReference>
<dbReference type="GO" id="GO:0019134">
    <property type="term" value="F:glucosamine-1-phosphate N-acetyltransferase activity"/>
    <property type="evidence" value="ECO:0007669"/>
    <property type="project" value="UniProtKB-UniRule"/>
</dbReference>
<dbReference type="GO" id="GO:0000287">
    <property type="term" value="F:magnesium ion binding"/>
    <property type="evidence" value="ECO:0007669"/>
    <property type="project" value="UniProtKB-UniRule"/>
</dbReference>
<dbReference type="GO" id="GO:0003977">
    <property type="term" value="F:UDP-N-acetylglucosamine diphosphorylase activity"/>
    <property type="evidence" value="ECO:0007669"/>
    <property type="project" value="UniProtKB-UniRule"/>
</dbReference>
<dbReference type="GO" id="GO:0000902">
    <property type="term" value="P:cell morphogenesis"/>
    <property type="evidence" value="ECO:0007669"/>
    <property type="project" value="UniProtKB-UniRule"/>
</dbReference>
<dbReference type="GO" id="GO:0071555">
    <property type="term" value="P:cell wall organization"/>
    <property type="evidence" value="ECO:0007669"/>
    <property type="project" value="UniProtKB-KW"/>
</dbReference>
<dbReference type="GO" id="GO:0009245">
    <property type="term" value="P:lipid A biosynthetic process"/>
    <property type="evidence" value="ECO:0007669"/>
    <property type="project" value="UniProtKB-UniRule"/>
</dbReference>
<dbReference type="GO" id="GO:0009252">
    <property type="term" value="P:peptidoglycan biosynthetic process"/>
    <property type="evidence" value="ECO:0007669"/>
    <property type="project" value="UniProtKB-UniRule"/>
</dbReference>
<dbReference type="GO" id="GO:0008360">
    <property type="term" value="P:regulation of cell shape"/>
    <property type="evidence" value="ECO:0007669"/>
    <property type="project" value="UniProtKB-KW"/>
</dbReference>
<dbReference type="GO" id="GO:0006048">
    <property type="term" value="P:UDP-N-acetylglucosamine biosynthetic process"/>
    <property type="evidence" value="ECO:0007669"/>
    <property type="project" value="UniProtKB-UniPathway"/>
</dbReference>
<dbReference type="CDD" id="cd02540">
    <property type="entry name" value="GT2_GlmU_N_bac"/>
    <property type="match status" value="1"/>
</dbReference>
<dbReference type="CDD" id="cd03353">
    <property type="entry name" value="LbH_GlmU_C"/>
    <property type="match status" value="1"/>
</dbReference>
<dbReference type="Gene3D" id="2.160.10.10">
    <property type="entry name" value="Hexapeptide repeat proteins"/>
    <property type="match status" value="1"/>
</dbReference>
<dbReference type="Gene3D" id="3.90.550.10">
    <property type="entry name" value="Spore Coat Polysaccharide Biosynthesis Protein SpsA, Chain A"/>
    <property type="match status" value="1"/>
</dbReference>
<dbReference type="HAMAP" id="MF_01631">
    <property type="entry name" value="GlmU"/>
    <property type="match status" value="1"/>
</dbReference>
<dbReference type="InterPro" id="IPR005882">
    <property type="entry name" value="Bifunctional_GlmU"/>
</dbReference>
<dbReference type="InterPro" id="IPR050065">
    <property type="entry name" value="GlmU-like"/>
</dbReference>
<dbReference type="InterPro" id="IPR038009">
    <property type="entry name" value="GlmU_C_LbH"/>
</dbReference>
<dbReference type="InterPro" id="IPR001451">
    <property type="entry name" value="Hexapep"/>
</dbReference>
<dbReference type="InterPro" id="IPR025877">
    <property type="entry name" value="MobA-like_NTP_Trfase"/>
</dbReference>
<dbReference type="InterPro" id="IPR029044">
    <property type="entry name" value="Nucleotide-diphossugar_trans"/>
</dbReference>
<dbReference type="InterPro" id="IPR011004">
    <property type="entry name" value="Trimer_LpxA-like_sf"/>
</dbReference>
<dbReference type="NCBIfam" id="TIGR01173">
    <property type="entry name" value="glmU"/>
    <property type="match status" value="1"/>
</dbReference>
<dbReference type="PANTHER" id="PTHR43584:SF3">
    <property type="entry name" value="BIFUNCTIONAL PROTEIN GLMU"/>
    <property type="match status" value="1"/>
</dbReference>
<dbReference type="PANTHER" id="PTHR43584">
    <property type="entry name" value="NUCLEOTIDYL TRANSFERASE"/>
    <property type="match status" value="1"/>
</dbReference>
<dbReference type="Pfam" id="PF00132">
    <property type="entry name" value="Hexapep"/>
    <property type="match status" value="1"/>
</dbReference>
<dbReference type="Pfam" id="PF12804">
    <property type="entry name" value="NTP_transf_3"/>
    <property type="match status" value="1"/>
</dbReference>
<dbReference type="SUPFAM" id="SSF53448">
    <property type="entry name" value="Nucleotide-diphospho-sugar transferases"/>
    <property type="match status" value="1"/>
</dbReference>
<dbReference type="SUPFAM" id="SSF51161">
    <property type="entry name" value="Trimeric LpxA-like enzymes"/>
    <property type="match status" value="1"/>
</dbReference>
<proteinExistence type="inferred from homology"/>
<evidence type="ECO:0000255" key="1">
    <source>
        <dbReference type="HAMAP-Rule" id="MF_01631"/>
    </source>
</evidence>